<organism>
    <name type="scientific">Anabaena variabilis</name>
    <dbReference type="NCBI Taxonomy" id="264691"/>
    <lineage>
        <taxon>Bacteria</taxon>
        <taxon>Bacillati</taxon>
        <taxon>Cyanobacteriota</taxon>
        <taxon>Cyanophyceae</taxon>
        <taxon>Nostocales</taxon>
        <taxon>Nostocaceae</taxon>
        <taxon>Trichormus</taxon>
    </lineage>
</organism>
<keyword id="KW-0275">Fatty acid biosynthesis</keyword>
<keyword id="KW-0276">Fatty acid metabolism</keyword>
<keyword id="KW-0408">Iron</keyword>
<keyword id="KW-0444">Lipid biosynthesis</keyword>
<keyword id="KW-0443">Lipid metabolism</keyword>
<keyword id="KW-0472">Membrane</keyword>
<keyword id="KW-0560">Oxidoreductase</keyword>
<keyword id="KW-0812">Transmembrane</keyword>
<keyword id="KW-1133">Transmembrane helix</keyword>
<protein>
    <recommendedName>
        <fullName evidence="6">sn-1 stearoyl-lipid 9-desaturase</fullName>
        <ecNumber evidence="4">1.14.19.28</ecNumber>
    </recommendedName>
    <alternativeName>
        <fullName evidence="5">Delta(9) acyl-lipid desaturase</fullName>
    </alternativeName>
</protein>
<name>DESC_ANAVA</name>
<reference key="1">
    <citation type="journal article" date="1994" name="J. Biol. Chem.">
        <title>delta 9 Acyl-lipid desaturases of cyanobacteria. Molecular cloning and substrate specificities in terms of fatty acids, sn-positions, and polar head groups.</title>
        <authorList>
            <person name="Sakamoto T."/>
            <person name="Wada H."/>
            <person name="Nishida I."/>
            <person name="Ohmori M."/>
            <person name="Murata N."/>
        </authorList>
    </citation>
    <scope>NUCLEOTIDE SEQUENCE [GENOMIC DNA]</scope>
    <scope>FUNCTION</scope>
    <scope>CATALYTIC ACTIVITY</scope>
    <scope>PATHWAY</scope>
    <source>
        <strain>M3</strain>
    </source>
</reference>
<accession>Q79F73</accession>
<sequence length="272" mass="31418">MTIATSTKPQINWVNTLFFLGLHIGALFAFIPSNFSWAAVGVALLLYWITGGLGITLGFHRLVTHRSFQTPKWLEYFLVLCGTLACQGGPIEWVGTHRIHHLHSDTDPDPHDSNKGFWWSHIGWLIYHSPSHADVPRFTKDIAEDPVYQFLQKYFIFIQIALGLLLLYLGGWSFVVWGVFFRIVWVYHCTWLVNSATHKFGYRTYDAGDRSTNCWWVAVLVFGEGWHNNHHAFQYSARHGLEWWEVDLTWMTVQLLQILGLATNVKLADKKQ</sequence>
<proteinExistence type="evidence at protein level"/>
<gene>
    <name evidence="5" type="primary">desC</name>
</gene>
<dbReference type="EC" id="1.14.19.28" evidence="4"/>
<dbReference type="EMBL" id="D14581">
    <property type="protein sequence ID" value="BAA03434.1"/>
    <property type="molecule type" value="Genomic_DNA"/>
</dbReference>
<dbReference type="SMR" id="Q79F73"/>
<dbReference type="BRENDA" id="1.14.19.28">
    <property type="organism ID" value="322"/>
</dbReference>
<dbReference type="UniPathway" id="UPA00658"/>
<dbReference type="GO" id="GO:0016020">
    <property type="term" value="C:membrane"/>
    <property type="evidence" value="ECO:0007669"/>
    <property type="project" value="UniProtKB-SubCell"/>
</dbReference>
<dbReference type="GO" id="GO:0016717">
    <property type="term" value="F:oxidoreductase activity, acting on paired donors, with oxidation of a pair of donors resulting in the reduction of molecular oxygen to two molecules of water"/>
    <property type="evidence" value="ECO:0007669"/>
    <property type="project" value="InterPro"/>
</dbReference>
<dbReference type="GO" id="GO:0006636">
    <property type="term" value="P:unsaturated fatty acid biosynthetic process"/>
    <property type="evidence" value="ECO:0007669"/>
    <property type="project" value="UniProtKB-UniPathway"/>
</dbReference>
<dbReference type="CDD" id="cd03505">
    <property type="entry name" value="Delta9-FADS-like"/>
    <property type="match status" value="1"/>
</dbReference>
<dbReference type="InterPro" id="IPR015876">
    <property type="entry name" value="Acyl-CoA_DS"/>
</dbReference>
<dbReference type="InterPro" id="IPR005804">
    <property type="entry name" value="FA_desaturase_dom"/>
</dbReference>
<dbReference type="PANTHER" id="PTHR11351">
    <property type="entry name" value="ACYL-COA DESATURASE"/>
    <property type="match status" value="1"/>
</dbReference>
<dbReference type="PANTHER" id="PTHR11351:SF31">
    <property type="entry name" value="DESATURASE 1, ISOFORM A-RELATED"/>
    <property type="match status" value="1"/>
</dbReference>
<dbReference type="Pfam" id="PF00487">
    <property type="entry name" value="FA_desaturase"/>
    <property type="match status" value="1"/>
</dbReference>
<dbReference type="PRINTS" id="PR00075">
    <property type="entry name" value="FACDDSATRASE"/>
</dbReference>
<evidence type="ECO:0000250" key="1">
    <source>
        <dbReference type="UniProtKB" id="O00767"/>
    </source>
</evidence>
<evidence type="ECO:0000250" key="2">
    <source>
        <dbReference type="UniProtKB" id="Q54795"/>
    </source>
</evidence>
<evidence type="ECO:0000255" key="3"/>
<evidence type="ECO:0000269" key="4">
    <source>
    </source>
</evidence>
<evidence type="ECO:0000303" key="5">
    <source>
    </source>
</evidence>
<evidence type="ECO:0000305" key="6"/>
<feature type="chain" id="PRO_0000459817" description="sn-1 stearoyl-lipid 9-desaturase">
    <location>
        <begin position="1"/>
        <end position="272"/>
    </location>
</feature>
<feature type="transmembrane region" description="Helical" evidence="3">
    <location>
        <begin position="11"/>
        <end position="31"/>
    </location>
</feature>
<feature type="transmembrane region" description="Helical" evidence="3">
    <location>
        <begin position="39"/>
        <end position="59"/>
    </location>
</feature>
<feature type="transmembrane region" description="Helical" evidence="3">
    <location>
        <begin position="160"/>
        <end position="180"/>
    </location>
</feature>
<feature type="short sequence motif" description="Histidine box-1" evidence="2">
    <location>
        <begin position="60"/>
        <end position="65"/>
    </location>
</feature>
<feature type="short sequence motif" description="Histidine box-2" evidence="2">
    <location>
        <begin position="97"/>
        <end position="101"/>
    </location>
</feature>
<feature type="short sequence motif" description="Histidine box-3" evidence="2">
    <location>
        <begin position="230"/>
        <end position="234"/>
    </location>
</feature>
<comment type="function">
    <text evidence="4">Desaturase involved in fatty acid biosynthesis (PubMed:7929259). Introduces a double bond at carbon 9 of stearoyl groups (18:0) attached to the sn-1 position of the glycerol moiety of membrane glycerolipids (PubMed:7929259). Does not desaturate palmitic acid (16:0), palmitoleic acid (16:1) and cis-vaccenic acid (18:1) (PubMed:7929259).</text>
</comment>
<comment type="catalytic activity">
    <reaction evidence="4">
        <text>a 1-octadecanoyl 2-acyl-glycerolipid + 2 reduced [2Fe-2S]-[ferredoxin] + O2 + 2 H(+) = a 1-[(9Z)-octadecenoyl]-2-acyl-glycerolipid + 2 oxidized [2Fe-2S]-[ferredoxin] + 2 H2O</text>
        <dbReference type="Rhea" id="RHEA:46772"/>
        <dbReference type="Rhea" id="RHEA-COMP:10000"/>
        <dbReference type="Rhea" id="RHEA-COMP:10001"/>
        <dbReference type="ChEBI" id="CHEBI:15377"/>
        <dbReference type="ChEBI" id="CHEBI:15378"/>
        <dbReference type="ChEBI" id="CHEBI:15379"/>
        <dbReference type="ChEBI" id="CHEBI:33737"/>
        <dbReference type="ChEBI" id="CHEBI:33738"/>
        <dbReference type="ChEBI" id="CHEBI:87007"/>
        <dbReference type="ChEBI" id="CHEBI:87008"/>
        <dbReference type="EC" id="1.14.19.28"/>
    </reaction>
    <physiologicalReaction direction="left-to-right" evidence="4">
        <dbReference type="Rhea" id="RHEA:46773"/>
    </physiologicalReaction>
</comment>
<comment type="cofactor">
    <cofactor evidence="1">
        <name>Fe(2+)</name>
        <dbReference type="ChEBI" id="CHEBI:29033"/>
    </cofactor>
</comment>
<comment type="pathway">
    <text evidence="4">Lipid metabolism; polyunsaturated fatty acid biosynthesis.</text>
</comment>
<comment type="subcellular location">
    <subcellularLocation>
        <location evidence="3">Membrane</location>
        <topology evidence="3">Multi-pass membrane protein</topology>
    </subcellularLocation>
</comment>
<comment type="domain">
    <text evidence="1">The histidine box domains are involved in binding the catalytic metal ions.</text>
</comment>
<comment type="similarity">
    <text evidence="6">Belongs to the fatty acid desaturase type 2 family.</text>
</comment>